<sequence length="245" mass="26231">MMRADLSKKPGQVSAMFDEVSSAYDRTNTLLSVGNDQLWRVATTRAVAPVAGERILDLAAGTGTSSAALAASGAHVVAADFSEGMLEVGRRRLAGDDRVEFVHADATDLPFDDDSFDAVTISFGLRNVVEPRKGLDELLRVLKPGGRIVICEFSTPPVPLVRRGYDLYMKAVAPSLVKLVSSNASAYEYLNESIQAWPDQETLSSWLRAAGFASVEHRNLTAGIVALHRGVKPAGRHAAPRPAAS</sequence>
<keyword id="KW-0474">Menaquinone biosynthesis</keyword>
<keyword id="KW-0489">Methyltransferase</keyword>
<keyword id="KW-0949">S-adenosyl-L-methionine</keyword>
<keyword id="KW-0808">Transferase</keyword>
<dbReference type="EC" id="2.1.1.163" evidence="1"/>
<dbReference type="EMBL" id="AM849034">
    <property type="protein sequence ID" value="CAQ03082.1"/>
    <property type="molecule type" value="Genomic_DNA"/>
</dbReference>
<dbReference type="SMR" id="B0RCZ0"/>
<dbReference type="STRING" id="31964.CMS3012"/>
<dbReference type="KEGG" id="cms:CMS3012"/>
<dbReference type="eggNOG" id="COG2226">
    <property type="taxonomic scope" value="Bacteria"/>
</dbReference>
<dbReference type="HOGENOM" id="CLU_037990_0_0_11"/>
<dbReference type="UniPathway" id="UPA00079">
    <property type="reaction ID" value="UER00169"/>
</dbReference>
<dbReference type="Proteomes" id="UP000001318">
    <property type="component" value="Chromosome"/>
</dbReference>
<dbReference type="GO" id="GO:0043770">
    <property type="term" value="F:demethylmenaquinone methyltransferase activity"/>
    <property type="evidence" value="ECO:0007669"/>
    <property type="project" value="UniProtKB-UniRule"/>
</dbReference>
<dbReference type="GO" id="GO:0009234">
    <property type="term" value="P:menaquinone biosynthetic process"/>
    <property type="evidence" value="ECO:0007669"/>
    <property type="project" value="UniProtKB-UniRule"/>
</dbReference>
<dbReference type="GO" id="GO:0032259">
    <property type="term" value="P:methylation"/>
    <property type="evidence" value="ECO:0007669"/>
    <property type="project" value="UniProtKB-KW"/>
</dbReference>
<dbReference type="CDD" id="cd02440">
    <property type="entry name" value="AdoMet_MTases"/>
    <property type="match status" value="1"/>
</dbReference>
<dbReference type="Gene3D" id="3.40.50.150">
    <property type="entry name" value="Vaccinia Virus protein VP39"/>
    <property type="match status" value="1"/>
</dbReference>
<dbReference type="HAMAP" id="MF_01813">
    <property type="entry name" value="MenG_UbiE_methyltr"/>
    <property type="match status" value="1"/>
</dbReference>
<dbReference type="InterPro" id="IPR029063">
    <property type="entry name" value="SAM-dependent_MTases_sf"/>
</dbReference>
<dbReference type="InterPro" id="IPR004033">
    <property type="entry name" value="UbiE/COQ5_MeTrFase"/>
</dbReference>
<dbReference type="InterPro" id="IPR023576">
    <property type="entry name" value="UbiE/COQ5_MeTrFase_CS"/>
</dbReference>
<dbReference type="NCBIfam" id="TIGR01934">
    <property type="entry name" value="MenG_MenH_UbiE"/>
    <property type="match status" value="1"/>
</dbReference>
<dbReference type="NCBIfam" id="NF001244">
    <property type="entry name" value="PRK00216.1-5"/>
    <property type="match status" value="1"/>
</dbReference>
<dbReference type="PANTHER" id="PTHR43591:SF24">
    <property type="entry name" value="2-METHOXY-6-POLYPRENYL-1,4-BENZOQUINOL METHYLASE, MITOCHONDRIAL"/>
    <property type="match status" value="1"/>
</dbReference>
<dbReference type="PANTHER" id="PTHR43591">
    <property type="entry name" value="METHYLTRANSFERASE"/>
    <property type="match status" value="1"/>
</dbReference>
<dbReference type="Pfam" id="PF01209">
    <property type="entry name" value="Ubie_methyltran"/>
    <property type="match status" value="1"/>
</dbReference>
<dbReference type="SUPFAM" id="SSF53335">
    <property type="entry name" value="S-adenosyl-L-methionine-dependent methyltransferases"/>
    <property type="match status" value="1"/>
</dbReference>
<dbReference type="PROSITE" id="PS51608">
    <property type="entry name" value="SAM_MT_UBIE"/>
    <property type="match status" value="1"/>
</dbReference>
<dbReference type="PROSITE" id="PS01183">
    <property type="entry name" value="UBIE_1"/>
    <property type="match status" value="1"/>
</dbReference>
<dbReference type="PROSITE" id="PS01184">
    <property type="entry name" value="UBIE_2"/>
    <property type="match status" value="1"/>
</dbReference>
<protein>
    <recommendedName>
        <fullName evidence="1">Demethylmenaquinone methyltransferase</fullName>
        <ecNumber evidence="1">2.1.1.163</ecNumber>
    </recommendedName>
</protein>
<evidence type="ECO:0000255" key="1">
    <source>
        <dbReference type="HAMAP-Rule" id="MF_01813"/>
    </source>
</evidence>
<proteinExistence type="inferred from homology"/>
<accession>B0RCZ0</accession>
<organism>
    <name type="scientific">Clavibacter sepedonicus</name>
    <name type="common">Clavibacter michiganensis subsp. sepedonicus</name>
    <dbReference type="NCBI Taxonomy" id="31964"/>
    <lineage>
        <taxon>Bacteria</taxon>
        <taxon>Bacillati</taxon>
        <taxon>Actinomycetota</taxon>
        <taxon>Actinomycetes</taxon>
        <taxon>Micrococcales</taxon>
        <taxon>Microbacteriaceae</taxon>
        <taxon>Clavibacter</taxon>
    </lineage>
</organism>
<feature type="chain" id="PRO_1000088279" description="Demethylmenaquinone methyltransferase">
    <location>
        <begin position="1"/>
        <end position="245"/>
    </location>
</feature>
<feature type="binding site" evidence="1">
    <location>
        <position position="62"/>
    </location>
    <ligand>
        <name>S-adenosyl-L-methionine</name>
        <dbReference type="ChEBI" id="CHEBI:59789"/>
    </ligand>
</feature>
<feature type="binding site" evidence="1">
    <location>
        <position position="80"/>
    </location>
    <ligand>
        <name>S-adenosyl-L-methionine</name>
        <dbReference type="ChEBI" id="CHEBI:59789"/>
    </ligand>
</feature>
<feature type="binding site" evidence="1">
    <location>
        <begin position="105"/>
        <end position="106"/>
    </location>
    <ligand>
        <name>S-adenosyl-L-methionine</name>
        <dbReference type="ChEBI" id="CHEBI:59789"/>
    </ligand>
</feature>
<feature type="binding site" evidence="1">
    <location>
        <position position="122"/>
    </location>
    <ligand>
        <name>S-adenosyl-L-methionine</name>
        <dbReference type="ChEBI" id="CHEBI:59789"/>
    </ligand>
</feature>
<reference key="1">
    <citation type="journal article" date="2008" name="J. Bacteriol.">
        <title>Genome of the actinomycete plant pathogen Clavibacter michiganensis subsp. sepedonicus suggests recent niche adaptation.</title>
        <authorList>
            <person name="Bentley S.D."/>
            <person name="Corton C."/>
            <person name="Brown S.E."/>
            <person name="Barron A."/>
            <person name="Clark L."/>
            <person name="Doggett J."/>
            <person name="Harris B."/>
            <person name="Ormond D."/>
            <person name="Quail M.A."/>
            <person name="May G."/>
            <person name="Francis D."/>
            <person name="Knudson D."/>
            <person name="Parkhill J."/>
            <person name="Ishimaru C.A."/>
        </authorList>
    </citation>
    <scope>NUCLEOTIDE SEQUENCE [LARGE SCALE GENOMIC DNA]</scope>
    <source>
        <strain>ATCC 33113 / DSM 20744 / JCM 9667 / LMG 2889 / ICMP 2535 / C-1</strain>
    </source>
</reference>
<name>MENG_CLASE</name>
<comment type="function">
    <text evidence="1">Methyltransferase required for the conversion of demethylmenaquinol (DMKH2) to menaquinol (MKH2).</text>
</comment>
<comment type="catalytic activity">
    <reaction evidence="1">
        <text>a 2-demethylmenaquinol + S-adenosyl-L-methionine = a menaquinol + S-adenosyl-L-homocysteine + H(+)</text>
        <dbReference type="Rhea" id="RHEA:42640"/>
        <dbReference type="Rhea" id="RHEA-COMP:9539"/>
        <dbReference type="Rhea" id="RHEA-COMP:9563"/>
        <dbReference type="ChEBI" id="CHEBI:15378"/>
        <dbReference type="ChEBI" id="CHEBI:18151"/>
        <dbReference type="ChEBI" id="CHEBI:55437"/>
        <dbReference type="ChEBI" id="CHEBI:57856"/>
        <dbReference type="ChEBI" id="CHEBI:59789"/>
        <dbReference type="EC" id="2.1.1.163"/>
    </reaction>
</comment>
<comment type="pathway">
    <text evidence="1">Quinol/quinone metabolism; menaquinone biosynthesis; menaquinol from 1,4-dihydroxy-2-naphthoate: step 2/2.</text>
</comment>
<comment type="similarity">
    <text evidence="1">Belongs to the class I-like SAM-binding methyltransferase superfamily. MenG/UbiE family.</text>
</comment>
<gene>
    <name evidence="1" type="primary">menG</name>
    <name type="ordered locus">CMS3012</name>
</gene>